<comment type="function">
    <text evidence="1">This magnesium-dependent enzyme catalyzes the hydrolysis of ATP coupled with the translocation of calcium from the cytosol out of the cell, into the endoplasmic reticulum, or into organelles.</text>
</comment>
<comment type="catalytic activity">
    <reaction>
        <text>Ca(2+)(in) + ATP + H2O = Ca(2+)(out) + ADP + phosphate + H(+)</text>
        <dbReference type="Rhea" id="RHEA:18105"/>
        <dbReference type="ChEBI" id="CHEBI:15377"/>
        <dbReference type="ChEBI" id="CHEBI:15378"/>
        <dbReference type="ChEBI" id="CHEBI:29108"/>
        <dbReference type="ChEBI" id="CHEBI:30616"/>
        <dbReference type="ChEBI" id="CHEBI:43474"/>
        <dbReference type="ChEBI" id="CHEBI:456216"/>
        <dbReference type="EC" id="7.2.2.10"/>
    </reaction>
</comment>
<comment type="activity regulation">
    <text evidence="1">Activated by calmodulin.</text>
</comment>
<comment type="subcellular location">
    <subcellularLocation>
        <location evidence="1">Membrane</location>
        <topology evidence="1">Multi-pass membrane protein</topology>
    </subcellularLocation>
</comment>
<comment type="domain">
    <text evidence="1">The N-terminus contains an autoinhibitory calmodulin-binding domain, which binds calmodulin in a calcium-dependent fashion.</text>
</comment>
<comment type="similarity">
    <text evidence="4">Belongs to the cation transport ATPase (P-type) (TC 3.A.3) family. Type IIB subfamily.</text>
</comment>
<keyword id="KW-0067">ATP-binding</keyword>
<keyword id="KW-0106">Calcium</keyword>
<keyword id="KW-0109">Calcium transport</keyword>
<keyword id="KW-0112">Calmodulin-binding</keyword>
<keyword id="KW-0406">Ion transport</keyword>
<keyword id="KW-0460">Magnesium</keyword>
<keyword id="KW-0472">Membrane</keyword>
<keyword id="KW-0479">Metal-binding</keyword>
<keyword id="KW-0547">Nucleotide-binding</keyword>
<keyword id="KW-0597">Phosphoprotein</keyword>
<keyword id="KW-1185">Reference proteome</keyword>
<keyword id="KW-1278">Translocase</keyword>
<keyword id="KW-0812">Transmembrane</keyword>
<keyword id="KW-1133">Transmembrane helix</keyword>
<keyword id="KW-0813">Transport</keyword>
<reference key="1">
    <citation type="journal article" date="2005" name="Mol. Genet. Genomics">
        <title>A fine physical map of the rice chromosome 5.</title>
        <authorList>
            <person name="Cheng C.-H."/>
            <person name="Chung M.C."/>
            <person name="Liu S.-M."/>
            <person name="Chen S.-K."/>
            <person name="Kao F.Y."/>
            <person name="Lin S.-J."/>
            <person name="Hsiao S.-H."/>
            <person name="Tseng I.C."/>
            <person name="Hsing Y.-I.C."/>
            <person name="Wu H.-P."/>
            <person name="Chen C.-S."/>
            <person name="Shaw J.-F."/>
            <person name="Wu J."/>
            <person name="Matsumoto T."/>
            <person name="Sasaki T."/>
            <person name="Chen H.-C."/>
            <person name="Chow T.-Y."/>
        </authorList>
    </citation>
    <scope>NUCLEOTIDE SEQUENCE [LARGE SCALE GENOMIC DNA]</scope>
    <source>
        <strain>cv. Nipponbare</strain>
    </source>
</reference>
<reference key="2">
    <citation type="journal article" date="2005" name="Nature">
        <title>The map-based sequence of the rice genome.</title>
        <authorList>
            <consortium name="International rice genome sequencing project (IRGSP)"/>
        </authorList>
    </citation>
    <scope>NUCLEOTIDE SEQUENCE [LARGE SCALE GENOMIC DNA]</scope>
    <source>
        <strain>cv. Nipponbare</strain>
    </source>
</reference>
<reference key="3">
    <citation type="journal article" date="2013" name="Rice">
        <title>Improvement of the Oryza sativa Nipponbare reference genome using next generation sequence and optical map data.</title>
        <authorList>
            <person name="Kawahara Y."/>
            <person name="de la Bastide M."/>
            <person name="Hamilton J.P."/>
            <person name="Kanamori H."/>
            <person name="McCombie W.R."/>
            <person name="Ouyang S."/>
            <person name="Schwartz D.C."/>
            <person name="Tanaka T."/>
            <person name="Wu J."/>
            <person name="Zhou S."/>
            <person name="Childs K.L."/>
            <person name="Davidson R.M."/>
            <person name="Lin H."/>
            <person name="Quesada-Ocampo L."/>
            <person name="Vaillancourt B."/>
            <person name="Sakai H."/>
            <person name="Lee S.S."/>
            <person name="Kim J."/>
            <person name="Numa H."/>
            <person name="Itoh T."/>
            <person name="Buell C.R."/>
            <person name="Matsumoto T."/>
        </authorList>
    </citation>
    <scope>GENOME REANNOTATION</scope>
    <source>
        <strain>cv. Nipponbare</strain>
    </source>
</reference>
<reference key="4">
    <citation type="journal article" date="2014" name="FEBS J.">
        <title>Genome-wide expressional and functional analysis of calcium transport elements during abiotic stress and development in rice.</title>
        <authorList>
            <person name="Singh A."/>
            <person name="Kanwar P."/>
            <person name="Yadav A.K."/>
            <person name="Mishra M."/>
            <person name="Jha S.K."/>
            <person name="Baranwal V."/>
            <person name="Pandey A."/>
            <person name="Kapoor S."/>
            <person name="Tyagi A.K."/>
            <person name="Pandey G.K."/>
        </authorList>
    </citation>
    <scope>GENE FAMILY</scope>
    <scope>NOMENCLATURE</scope>
</reference>
<accession>Q65X71</accession>
<evidence type="ECO:0000250" key="1"/>
<evidence type="ECO:0000255" key="2"/>
<evidence type="ECO:0000303" key="3">
    <source>
    </source>
</evidence>
<evidence type="ECO:0000305" key="4"/>
<name>ACA6_ORYSJ</name>
<feature type="chain" id="PRO_0000247305" description="Probable calcium-transporting ATPase 6, plasma membrane-type">
    <location>
        <begin position="1"/>
        <end position="1021"/>
    </location>
</feature>
<feature type="topological domain" description="Cytoplasmic" evidence="2">
    <location>
        <begin position="1"/>
        <end position="155"/>
    </location>
</feature>
<feature type="transmembrane region" description="Helical" evidence="2">
    <location>
        <begin position="156"/>
        <end position="176"/>
    </location>
</feature>
<feature type="transmembrane region" description="Helical" evidence="2">
    <location>
        <begin position="181"/>
        <end position="201"/>
    </location>
</feature>
<feature type="topological domain" description="Cytoplasmic" evidence="2">
    <location>
        <begin position="202"/>
        <end position="241"/>
    </location>
</feature>
<feature type="transmembrane region" description="Helical" evidence="2">
    <location>
        <begin position="242"/>
        <end position="262"/>
    </location>
</feature>
<feature type="transmembrane region" description="Helical" evidence="2">
    <location>
        <begin position="338"/>
        <end position="358"/>
    </location>
</feature>
<feature type="topological domain" description="Cytoplasmic" evidence="2">
    <location>
        <begin position="359"/>
        <end position="384"/>
    </location>
</feature>
<feature type="transmembrane region" description="Helical" evidence="2">
    <location>
        <begin position="385"/>
        <end position="405"/>
    </location>
</feature>
<feature type="transmembrane region" description="Helical" evidence="2">
    <location>
        <begin position="807"/>
        <end position="827"/>
    </location>
</feature>
<feature type="topological domain" description="Cytoplasmic" evidence="2">
    <location>
        <begin position="828"/>
        <end position="829"/>
    </location>
</feature>
<feature type="transmembrane region" description="Helical" evidence="2">
    <location>
        <begin position="830"/>
        <end position="850"/>
    </location>
</feature>
<feature type="transmembrane region" description="Helical" evidence="2">
    <location>
        <begin position="879"/>
        <end position="899"/>
    </location>
</feature>
<feature type="topological domain" description="Cytoplasmic" evidence="2">
    <location>
        <begin position="900"/>
        <end position="942"/>
    </location>
</feature>
<feature type="transmembrane region" description="Helical" evidence="2">
    <location>
        <begin position="943"/>
        <end position="963"/>
    </location>
</feature>
<feature type="transmembrane region" description="Helical" evidence="2">
    <location>
        <begin position="974"/>
        <end position="994"/>
    </location>
</feature>
<feature type="topological domain" description="Cytoplasmic" evidence="2">
    <location>
        <begin position="995"/>
        <end position="1021"/>
    </location>
</feature>
<feature type="active site" description="4-aspartylphosphate intermediate" evidence="1">
    <location>
        <position position="441"/>
    </location>
</feature>
<feature type="binding site" evidence="1">
    <location>
        <position position="740"/>
    </location>
    <ligand>
        <name>Mg(2+)</name>
        <dbReference type="ChEBI" id="CHEBI:18420"/>
    </ligand>
</feature>
<feature type="binding site" evidence="1">
    <location>
        <position position="744"/>
    </location>
    <ligand>
        <name>Mg(2+)</name>
        <dbReference type="ChEBI" id="CHEBI:18420"/>
    </ligand>
</feature>
<organism>
    <name type="scientific">Oryza sativa subsp. japonica</name>
    <name type="common">Rice</name>
    <dbReference type="NCBI Taxonomy" id="39947"/>
    <lineage>
        <taxon>Eukaryota</taxon>
        <taxon>Viridiplantae</taxon>
        <taxon>Streptophyta</taxon>
        <taxon>Embryophyta</taxon>
        <taxon>Tracheophyta</taxon>
        <taxon>Spermatophyta</taxon>
        <taxon>Magnoliopsida</taxon>
        <taxon>Liliopsida</taxon>
        <taxon>Poales</taxon>
        <taxon>Poaceae</taxon>
        <taxon>BOP clade</taxon>
        <taxon>Oryzoideae</taxon>
        <taxon>Oryzeae</taxon>
        <taxon>Oryzinae</taxon>
        <taxon>Oryza</taxon>
        <taxon>Oryza sativa</taxon>
    </lineage>
</organism>
<protein>
    <recommendedName>
        <fullName evidence="4">Probable calcium-transporting ATPase 6, plasma membrane-type</fullName>
        <shortName evidence="3">OsACA6</shortName>
        <ecNumber>7.2.2.10</ecNumber>
    </recommendedName>
    <alternativeName>
        <fullName evidence="4">Ca(2+)-ATPase isoform 6</fullName>
    </alternativeName>
</protein>
<sequence>MEGGRSWSIESYLNEYFDIPAKNPPGEARRRWRRAVGLIVRNRRRRFGRFSDVDAIDEAQRRKILVRVKQYHLPPELIEEGFCISPDELAAIANMREDYTMLRMHGGINGISRKIKASLEDGAKETDIATRQMLYGANRHAEKPPRSFWMFVWDALHDLTLIILVVCALVSIVVGLATKGWPMGIYDGFGIILSILLVVLVTATSDYQQARKFMELDREKQKIYIRVTRDKKTKEVLVHDLVVGDILHLSIGDVVPADGLFISGDCLMIDESSLSGESEPVNISEERPFLHAGNKVVDGAAKMLVTAVGTRTEWGKIMGTLNGDGVDETPLQVKLNGVATIIGQIGLVFAVLTFLVLLARFLADKGMHVGLLNWSANDALTIVNYFAIAVTIIVVAVPEGLPLAVTLSLAFAMKKLMHDKALVRHLAACETMGSASCICTDKTGTLTTNHMIVDKVWIGDVKFVGDKKNSELKSTISERVMAILIQGIFVNTASEVVKGDDGKNTILGLATETALLEFGLSLEEHLYDDYNKLTRIKVDPFNSVKKKMSVTIQLPNGGIRTFCKGASEIILEQCNTIHNTDGNIVPLSEMQKHNVLNIINSFASEALRTLCIAFKDMDEFPNDQPISDDGYTLIAVFGIKDPVRPGVKDAVRTCMAAGIRVRMVTGDNINTAKAIAKECGILTEDGIAIEGQQLNNKSSDELKELLPKIQVIARSLPMDKYKLVTSLKSMYQEVVAVTGDGTNDAPALHESDIGLAMGITGTEVAKESADVIIMDDNFETIVNVARWGRAVYLNIQKFVQFQLTVNIVALIVNFVSACIIGSAPLTAVQLLWVNMIMDTLGALALATEPPNDEMMKRPPVRRGDNFITRIMWRNILGQGLYQLLVLATLMVIGKKLLSIEGPQSDKTINTLIFNSFVFCQVFNEINCREMEKINVLQGIFRNWIFVGILTATVIFQVIIVEFLGTFANTVPLSGELWLLSVVIGSISMIISVILKCIPVEFNKTNTKPHGYELIPEGPEIL</sequence>
<gene>
    <name evidence="3" type="primary">ACA6</name>
    <name type="ordered locus">Os05g0495600</name>
    <name type="ordered locus">LOC_Os05g41580</name>
    <name type="ORF">OJ1579_G03.12</name>
</gene>
<proteinExistence type="inferred from homology"/>
<dbReference type="EC" id="7.2.2.10"/>
<dbReference type="EMBL" id="AC112160">
    <property type="protein sequence ID" value="AAU44048.1"/>
    <property type="molecule type" value="Genomic_DNA"/>
</dbReference>
<dbReference type="EMBL" id="AP014961">
    <property type="status" value="NOT_ANNOTATED_CDS"/>
    <property type="molecule type" value="Genomic_DNA"/>
</dbReference>
<dbReference type="SMR" id="Q65X71"/>
<dbReference type="FunCoup" id="Q65X71">
    <property type="interactions" value="2015"/>
</dbReference>
<dbReference type="STRING" id="39947.Q65X71"/>
<dbReference type="PaxDb" id="39947-Q65X71"/>
<dbReference type="eggNOG" id="KOG0204">
    <property type="taxonomic scope" value="Eukaryota"/>
</dbReference>
<dbReference type="HOGENOM" id="CLU_002360_9_2_1"/>
<dbReference type="InParanoid" id="Q65X71"/>
<dbReference type="Proteomes" id="UP000000763">
    <property type="component" value="Chromosome 5"/>
</dbReference>
<dbReference type="Proteomes" id="UP000059680">
    <property type="component" value="Chromosome 5"/>
</dbReference>
<dbReference type="GO" id="GO:0043231">
    <property type="term" value="C:intracellular membrane-bounded organelle"/>
    <property type="evidence" value="ECO:0000318"/>
    <property type="project" value="GO_Central"/>
</dbReference>
<dbReference type="GO" id="GO:0005886">
    <property type="term" value="C:plasma membrane"/>
    <property type="evidence" value="ECO:0000318"/>
    <property type="project" value="GO_Central"/>
</dbReference>
<dbReference type="GO" id="GO:0005524">
    <property type="term" value="F:ATP binding"/>
    <property type="evidence" value="ECO:0007669"/>
    <property type="project" value="UniProtKB-KW"/>
</dbReference>
<dbReference type="GO" id="GO:0016887">
    <property type="term" value="F:ATP hydrolysis activity"/>
    <property type="evidence" value="ECO:0007669"/>
    <property type="project" value="InterPro"/>
</dbReference>
<dbReference type="GO" id="GO:0005516">
    <property type="term" value="F:calmodulin binding"/>
    <property type="evidence" value="ECO:0007669"/>
    <property type="project" value="UniProtKB-KW"/>
</dbReference>
<dbReference type="GO" id="GO:0046872">
    <property type="term" value="F:metal ion binding"/>
    <property type="evidence" value="ECO:0007669"/>
    <property type="project" value="UniProtKB-KW"/>
</dbReference>
<dbReference type="GO" id="GO:0005388">
    <property type="term" value="F:P-type calcium transporter activity"/>
    <property type="evidence" value="ECO:0000318"/>
    <property type="project" value="GO_Central"/>
</dbReference>
<dbReference type="CDD" id="cd02081">
    <property type="entry name" value="P-type_ATPase_Ca_PMCA-like"/>
    <property type="match status" value="1"/>
</dbReference>
<dbReference type="FunFam" id="1.20.1110.10:FF:000039">
    <property type="entry name" value="Calcium-transporting ATPase"/>
    <property type="match status" value="1"/>
</dbReference>
<dbReference type="FunFam" id="2.70.150.10:FF:000006">
    <property type="entry name" value="Calcium-transporting ATPase"/>
    <property type="match status" value="1"/>
</dbReference>
<dbReference type="FunFam" id="3.40.1110.10:FF:000011">
    <property type="entry name" value="Calcium-transporting ATPase"/>
    <property type="match status" value="1"/>
</dbReference>
<dbReference type="FunFam" id="3.40.50.1000:FF:000011">
    <property type="entry name" value="Calcium-transporting ATPase"/>
    <property type="match status" value="1"/>
</dbReference>
<dbReference type="Gene3D" id="3.40.1110.10">
    <property type="entry name" value="Calcium-transporting ATPase, cytoplasmic domain N"/>
    <property type="match status" value="1"/>
</dbReference>
<dbReference type="Gene3D" id="2.70.150.10">
    <property type="entry name" value="Calcium-transporting ATPase, cytoplasmic transduction domain A"/>
    <property type="match status" value="1"/>
</dbReference>
<dbReference type="Gene3D" id="1.20.1110.10">
    <property type="entry name" value="Calcium-transporting ATPase, transmembrane domain"/>
    <property type="match status" value="1"/>
</dbReference>
<dbReference type="Gene3D" id="3.40.50.1000">
    <property type="entry name" value="HAD superfamily/HAD-like"/>
    <property type="match status" value="1"/>
</dbReference>
<dbReference type="InterPro" id="IPR006068">
    <property type="entry name" value="ATPase_P-typ_cation-transptr_C"/>
</dbReference>
<dbReference type="InterPro" id="IPR004014">
    <property type="entry name" value="ATPase_P-typ_cation-transptr_N"/>
</dbReference>
<dbReference type="InterPro" id="IPR023299">
    <property type="entry name" value="ATPase_P-typ_cyto_dom_N"/>
</dbReference>
<dbReference type="InterPro" id="IPR018303">
    <property type="entry name" value="ATPase_P-typ_P_site"/>
</dbReference>
<dbReference type="InterPro" id="IPR023298">
    <property type="entry name" value="ATPase_P-typ_TM_dom_sf"/>
</dbReference>
<dbReference type="InterPro" id="IPR008250">
    <property type="entry name" value="ATPase_P-typ_transduc_dom_A_sf"/>
</dbReference>
<dbReference type="InterPro" id="IPR024750">
    <property type="entry name" value="Ca_ATPase_N_dom"/>
</dbReference>
<dbReference type="InterPro" id="IPR036412">
    <property type="entry name" value="HAD-like_sf"/>
</dbReference>
<dbReference type="InterPro" id="IPR023214">
    <property type="entry name" value="HAD_sf"/>
</dbReference>
<dbReference type="InterPro" id="IPR006408">
    <property type="entry name" value="P-type_ATPase_IIB"/>
</dbReference>
<dbReference type="InterPro" id="IPR001757">
    <property type="entry name" value="P_typ_ATPase"/>
</dbReference>
<dbReference type="InterPro" id="IPR044492">
    <property type="entry name" value="P_typ_ATPase_HD_dom"/>
</dbReference>
<dbReference type="NCBIfam" id="TIGR01517">
    <property type="entry name" value="ATPase-IIB_Ca"/>
    <property type="match status" value="1"/>
</dbReference>
<dbReference type="NCBIfam" id="TIGR01494">
    <property type="entry name" value="ATPase_P-type"/>
    <property type="match status" value="3"/>
</dbReference>
<dbReference type="PANTHER" id="PTHR24093:SF512">
    <property type="entry name" value="CALCIUM-TRANSPORTING ATPASE 6, PLASMA MEMBRANE-TYPE-RELATED"/>
    <property type="match status" value="1"/>
</dbReference>
<dbReference type="PANTHER" id="PTHR24093">
    <property type="entry name" value="CATION TRANSPORTING ATPASE"/>
    <property type="match status" value="1"/>
</dbReference>
<dbReference type="Pfam" id="PF12515">
    <property type="entry name" value="CaATP_NAI"/>
    <property type="match status" value="1"/>
</dbReference>
<dbReference type="Pfam" id="PF13246">
    <property type="entry name" value="Cation_ATPase"/>
    <property type="match status" value="1"/>
</dbReference>
<dbReference type="Pfam" id="PF00689">
    <property type="entry name" value="Cation_ATPase_C"/>
    <property type="match status" value="1"/>
</dbReference>
<dbReference type="Pfam" id="PF00690">
    <property type="entry name" value="Cation_ATPase_N"/>
    <property type="match status" value="1"/>
</dbReference>
<dbReference type="Pfam" id="PF00122">
    <property type="entry name" value="E1-E2_ATPase"/>
    <property type="match status" value="1"/>
</dbReference>
<dbReference type="Pfam" id="PF00702">
    <property type="entry name" value="Hydrolase"/>
    <property type="match status" value="1"/>
</dbReference>
<dbReference type="PRINTS" id="PR00119">
    <property type="entry name" value="CATATPASE"/>
</dbReference>
<dbReference type="PRINTS" id="PR00120">
    <property type="entry name" value="HATPASE"/>
</dbReference>
<dbReference type="SFLD" id="SFLDS00003">
    <property type="entry name" value="Haloacid_Dehalogenase"/>
    <property type="match status" value="1"/>
</dbReference>
<dbReference type="SFLD" id="SFLDF00027">
    <property type="entry name" value="p-type_atpase"/>
    <property type="match status" value="1"/>
</dbReference>
<dbReference type="SMART" id="SM00831">
    <property type="entry name" value="Cation_ATPase_N"/>
    <property type="match status" value="1"/>
</dbReference>
<dbReference type="SUPFAM" id="SSF81653">
    <property type="entry name" value="Calcium ATPase, transduction domain A"/>
    <property type="match status" value="1"/>
</dbReference>
<dbReference type="SUPFAM" id="SSF81665">
    <property type="entry name" value="Calcium ATPase, transmembrane domain M"/>
    <property type="match status" value="1"/>
</dbReference>
<dbReference type="SUPFAM" id="SSF56784">
    <property type="entry name" value="HAD-like"/>
    <property type="match status" value="1"/>
</dbReference>
<dbReference type="SUPFAM" id="SSF81660">
    <property type="entry name" value="Metal cation-transporting ATPase, ATP-binding domain N"/>
    <property type="match status" value="1"/>
</dbReference>
<dbReference type="PROSITE" id="PS00154">
    <property type="entry name" value="ATPASE_E1_E2"/>
    <property type="match status" value="1"/>
</dbReference>